<feature type="chain" id="PRO_0000342894" description="Lysine-specific histone demethylase 1 homolog 2">
    <location>
        <begin position="1"/>
        <end position="746"/>
    </location>
</feature>
<feature type="domain" description="SWIRM" evidence="2">
    <location>
        <begin position="51"/>
        <end position="152"/>
    </location>
</feature>
<feature type="region of interest" description="Disordered" evidence="3">
    <location>
        <begin position="1"/>
        <end position="26"/>
    </location>
</feature>
<feature type="binding site" evidence="1">
    <location>
        <position position="189"/>
    </location>
    <ligand>
        <name>FAD</name>
        <dbReference type="ChEBI" id="CHEBI:57692"/>
    </ligand>
</feature>
<feature type="binding site" evidence="1">
    <location>
        <position position="191"/>
    </location>
    <ligand>
        <name>FAD</name>
        <dbReference type="ChEBI" id="CHEBI:57692"/>
    </ligand>
</feature>
<feature type="binding site" evidence="1">
    <location>
        <position position="197"/>
    </location>
    <ligand>
        <name>FAD</name>
        <dbReference type="ChEBI" id="CHEBI:57692"/>
    </ligand>
</feature>
<feature type="binding site" evidence="1">
    <location>
        <position position="569"/>
    </location>
    <ligand>
        <name>FAD</name>
        <dbReference type="ChEBI" id="CHEBI:57692"/>
    </ligand>
</feature>
<protein>
    <recommendedName>
        <fullName evidence="6">Lysine-specific histone demethylase 1 homolog 2</fullName>
        <ecNumber evidence="7">1.-.-.-</ecNumber>
    </recommendedName>
    <alternativeName>
        <fullName>Flavin-containing amine oxidase domain-containing protein 2</fullName>
    </alternativeName>
    <alternativeName>
        <fullName evidence="6">Protein LSD1-LIKE 2</fullName>
    </alternativeName>
</protein>
<accession>Q9LID0</accession>
<keyword id="KW-0156">Chromatin regulator</keyword>
<keyword id="KW-0274">FAD</keyword>
<keyword id="KW-0285">Flavoprotein</keyword>
<keyword id="KW-0560">Oxidoreductase</keyword>
<keyword id="KW-1185">Reference proteome</keyword>
<keyword id="KW-0678">Repressor</keyword>
<keyword id="KW-0804">Transcription</keyword>
<keyword id="KW-0805">Transcription regulation</keyword>
<dbReference type="EC" id="1.-.-.-" evidence="7"/>
<dbReference type="EMBL" id="AP001307">
    <property type="protein sequence ID" value="BAB01917.1"/>
    <property type="molecule type" value="Genomic_DNA"/>
</dbReference>
<dbReference type="EMBL" id="CP002686">
    <property type="protein sequence ID" value="AEE75397.1"/>
    <property type="molecule type" value="Genomic_DNA"/>
</dbReference>
<dbReference type="RefSeq" id="NP_187981.1">
    <property type="nucleotide sequence ID" value="NM_112218.2"/>
</dbReference>
<dbReference type="SMR" id="Q9LID0"/>
<dbReference type="BioGRID" id="5911">
    <property type="interactions" value="3"/>
</dbReference>
<dbReference type="FunCoup" id="Q9LID0">
    <property type="interactions" value="3487"/>
</dbReference>
<dbReference type="IntAct" id="Q9LID0">
    <property type="interactions" value="3"/>
</dbReference>
<dbReference type="STRING" id="3702.Q9LID0"/>
<dbReference type="iPTMnet" id="Q9LID0"/>
<dbReference type="PaxDb" id="3702-AT3G13682.1"/>
<dbReference type="ProteomicsDB" id="237133"/>
<dbReference type="EnsemblPlants" id="AT3G13682.1">
    <property type="protein sequence ID" value="AT3G13682.1"/>
    <property type="gene ID" value="AT3G13682"/>
</dbReference>
<dbReference type="GeneID" id="820577"/>
<dbReference type="Gramene" id="AT3G13682.1">
    <property type="protein sequence ID" value="AT3G13682.1"/>
    <property type="gene ID" value="AT3G13682"/>
</dbReference>
<dbReference type="KEGG" id="ath:AT3G13682"/>
<dbReference type="Araport" id="AT3G13682"/>
<dbReference type="TAIR" id="AT3G13682">
    <property type="gene designation" value="LDL2"/>
</dbReference>
<dbReference type="eggNOG" id="KOG0029">
    <property type="taxonomic scope" value="Eukaryota"/>
</dbReference>
<dbReference type="HOGENOM" id="CLU_004498_5_0_1"/>
<dbReference type="InParanoid" id="Q9LID0"/>
<dbReference type="OMA" id="PYVFWGE"/>
<dbReference type="OrthoDB" id="2219495at2759"/>
<dbReference type="PhylomeDB" id="Q9LID0"/>
<dbReference type="BioCyc" id="ARA:AT3G13682-MONOMER"/>
<dbReference type="PRO" id="PR:Q9LID0"/>
<dbReference type="Proteomes" id="UP000006548">
    <property type="component" value="Chromosome 3"/>
</dbReference>
<dbReference type="ExpressionAtlas" id="Q9LID0">
    <property type="expression patterns" value="baseline and differential"/>
</dbReference>
<dbReference type="GO" id="GO:0016491">
    <property type="term" value="F:oxidoreductase activity"/>
    <property type="evidence" value="ECO:0007669"/>
    <property type="project" value="UniProtKB-KW"/>
</dbReference>
<dbReference type="GO" id="GO:0006325">
    <property type="term" value="P:chromatin organization"/>
    <property type="evidence" value="ECO:0007669"/>
    <property type="project" value="UniProtKB-KW"/>
</dbReference>
<dbReference type="Gene3D" id="3.90.660.10">
    <property type="match status" value="1"/>
</dbReference>
<dbReference type="Gene3D" id="3.50.50.60">
    <property type="entry name" value="FAD/NAD(P)-binding domain"/>
    <property type="match status" value="1"/>
</dbReference>
<dbReference type="Gene3D" id="1.10.10.10">
    <property type="entry name" value="Winged helix-like DNA-binding domain superfamily/Winged helix DNA-binding domain"/>
    <property type="match status" value="1"/>
</dbReference>
<dbReference type="InterPro" id="IPR002937">
    <property type="entry name" value="Amino_oxidase"/>
</dbReference>
<dbReference type="InterPro" id="IPR036188">
    <property type="entry name" value="FAD/NAD-bd_sf"/>
</dbReference>
<dbReference type="InterPro" id="IPR050281">
    <property type="entry name" value="Flavin_monoamine_oxidase"/>
</dbReference>
<dbReference type="InterPro" id="IPR009057">
    <property type="entry name" value="Homeodomain-like_sf"/>
</dbReference>
<dbReference type="InterPro" id="IPR007526">
    <property type="entry name" value="SWIRM"/>
</dbReference>
<dbReference type="InterPro" id="IPR036388">
    <property type="entry name" value="WH-like_DNA-bd_sf"/>
</dbReference>
<dbReference type="PANTHER" id="PTHR10742">
    <property type="entry name" value="FLAVIN MONOAMINE OXIDASE"/>
    <property type="match status" value="1"/>
</dbReference>
<dbReference type="PANTHER" id="PTHR10742:SF373">
    <property type="entry name" value="LYSINE-SPECIFIC HISTONE DEMETHYLASE 1 HOMOLOG 2"/>
    <property type="match status" value="1"/>
</dbReference>
<dbReference type="Pfam" id="PF01593">
    <property type="entry name" value="Amino_oxidase"/>
    <property type="match status" value="1"/>
</dbReference>
<dbReference type="Pfam" id="PF04433">
    <property type="entry name" value="SWIRM"/>
    <property type="match status" value="1"/>
</dbReference>
<dbReference type="SUPFAM" id="SSF54373">
    <property type="entry name" value="FAD-linked reductases, C-terminal domain"/>
    <property type="match status" value="1"/>
</dbReference>
<dbReference type="SUPFAM" id="SSF51905">
    <property type="entry name" value="FAD/NAD(P)-binding domain"/>
    <property type="match status" value="1"/>
</dbReference>
<dbReference type="SUPFAM" id="SSF46689">
    <property type="entry name" value="Homeodomain-like"/>
    <property type="match status" value="1"/>
</dbReference>
<dbReference type="PROSITE" id="PS50934">
    <property type="entry name" value="SWIRM"/>
    <property type="match status" value="1"/>
</dbReference>
<gene>
    <name evidence="6" type="primary">LDL2</name>
    <name evidence="8" type="ordered locus">At3g13682</name>
    <name evidence="9" type="ORF">MMM17.10</name>
</gene>
<reference key="1">
    <citation type="journal article" date="2000" name="DNA Res.">
        <title>Structural analysis of Arabidopsis thaliana chromosome 3. II. Sequence features of the 4,251,695 bp regions covered by 90 P1, TAC and BAC clones.</title>
        <authorList>
            <person name="Kaneko T."/>
            <person name="Katoh T."/>
            <person name="Sato S."/>
            <person name="Nakamura Y."/>
            <person name="Asamizu E."/>
            <person name="Tabata S."/>
        </authorList>
    </citation>
    <scope>NUCLEOTIDE SEQUENCE [LARGE SCALE GENOMIC DNA]</scope>
    <source>
        <strain>cv. Columbia</strain>
    </source>
</reference>
<reference key="2">
    <citation type="journal article" date="2017" name="Plant J.">
        <title>Araport11: a complete reannotation of the Arabidopsis thaliana reference genome.</title>
        <authorList>
            <person name="Cheng C.Y."/>
            <person name="Krishnakumar V."/>
            <person name="Chan A.P."/>
            <person name="Thibaud-Nissen F."/>
            <person name="Schobel S."/>
            <person name="Town C.D."/>
        </authorList>
    </citation>
    <scope>GENOME REANNOTATION</scope>
    <source>
        <strain>cv. Columbia</strain>
    </source>
</reference>
<reference key="3">
    <citation type="journal article" date="2007" name="Plant Cell">
        <title>Arabidopsis relatives of the human lysine-specific demethylase1 repress the expression of FWA and FLOWERING LOCUS C and thus promote the floral transition.</title>
        <authorList>
            <person name="Jiang D."/>
            <person name="Yang W."/>
            <person name="He Y."/>
            <person name="Amasino R.M."/>
        </authorList>
    </citation>
    <scope>FUNCTION</scope>
    <scope>TISSUE SPECIFICITY</scope>
</reference>
<reference key="4">
    <citation type="journal article" date="2015" name="Front. Plant Sci.">
        <title>Arabidopsis histone demethylases LDL1 and LDL2 control primary seed dormancy by regulating DELAY OF GERMINATION 1 and ABA signaling-related genes.</title>
        <authorList>
            <person name="Zhao M."/>
            <person name="Yang S."/>
            <person name="Liu X."/>
            <person name="Wu K."/>
        </authorList>
    </citation>
    <scope>FUNCTION</scope>
</reference>
<proteinExistence type="evidence at protein level"/>
<name>LDL2_ARATH</name>
<comment type="function">
    <text evidence="4 5">Probable histone demethylase that reduces the levels of histone H3 'Lys-4' methylation in chromatin of the floral repressor FLOWERING LOCUS C (FLC) and the sporophytically silenced floral repressor FWA (PubMed:17921315). Seems to act in partial redundancy with FLOWERING LOCUS D (FLD) to repress FLC expression (PubMed:17921315). Required for cytosine methylation of FWA (PubMed:17921315). Controls primary seed dormancy by regulating DOG1 and abscisic acid signaling-related genes (PubMed:25852712).</text>
</comment>
<comment type="cofactor">
    <cofactor evidence="7">
        <name>FAD</name>
        <dbReference type="ChEBI" id="CHEBI:57692"/>
    </cofactor>
</comment>
<comment type="interaction">
    <interactant intactId="EBI-15195631">
        <id>Q9LID0</id>
    </interactant>
    <interactant intactId="EBI-3946677">
        <id>Q9ZSY8</id>
        <label>IAA27</label>
    </interactant>
    <organismsDiffer>false</organismsDiffer>
    <experiments>3</experiments>
</comment>
<comment type="tissue specificity">
    <text evidence="4">Expressed in the shoot and root apical regions of young seedlings. Expressed in inflorescences.</text>
</comment>
<comment type="similarity">
    <text evidence="7">Belongs to the flavin monoamine oxidase family.</text>
</comment>
<sequence length="746" mass="82350">MNSPASDETAPRRNRRKVSRKNYDENAMDELIEKQLGGKAKKKYRTKQDLEKETETEALIALSVGFPIDELLEEEIRAGVVRELGGKEQNDYIVVRNHIVARWRGNVGIWLLKDQIRETVSSDFEHLISAAYDFLLFNGYINFGVSPLFAPYIPEEGTEGSVIVVGAGLAGLAAARQLLSFGFKVLVLEGRSRPGGRVYTQKMGGKDRFAAVELGGSVITGLHANPLGVLARQLSIPLHKVRDNCPLYNSEGVLVDKVADSNVEFGFNKLLDKVTEVREMMEGAAKKISLGEVLETLRVLYGVAKDSEERKLFDWHLANLEYANAGCLSNLSAAYWDQDDPYEMGGDHCFLAGGNWRLINALAEGLPIIYGKSVDTIKYGDGGVEVISGSQIFQADMILCTVPLGVLKKRSIKFEPELPRRKQAAIDRLGFGLLNKVAMLFPSVFWGDELDTFGCLNESSINRGEFFLFYAYHTVSGGPALVALVAGEAAQRFECTEPSVLLHRVLKKLRGIYGPKGVVVPDPIQTVCTRWGSDPLSYGSYSHVRVGSSGVDYDILAESVSNRLFFAGEATTRQHPATMHGAYLSGLREASKILHVANYLRSNLKKPVQRYSGVNINVLEDMFKRPDIAIGKLSFVFNPLTDDPKSFGLVRVCFDNFEEDPTNRLQLYTILSREQANKIKELDENSNESKLSCLMNTLGLKLMGANSVLDTGGALISVIANARRGRSRSHVVAGQCNLPLNPLHFN</sequence>
<evidence type="ECO:0000250" key="1">
    <source>
        <dbReference type="UniProtKB" id="O60341"/>
    </source>
</evidence>
<evidence type="ECO:0000255" key="2">
    <source>
        <dbReference type="PROSITE-ProRule" id="PRU00247"/>
    </source>
</evidence>
<evidence type="ECO:0000256" key="3">
    <source>
        <dbReference type="SAM" id="MobiDB-lite"/>
    </source>
</evidence>
<evidence type="ECO:0000269" key="4">
    <source>
    </source>
</evidence>
<evidence type="ECO:0000269" key="5">
    <source>
    </source>
</evidence>
<evidence type="ECO:0000303" key="6">
    <source>
    </source>
</evidence>
<evidence type="ECO:0000305" key="7"/>
<evidence type="ECO:0000312" key="8">
    <source>
        <dbReference type="Araport" id="AT3G13682"/>
    </source>
</evidence>
<evidence type="ECO:0000312" key="9">
    <source>
        <dbReference type="EMBL" id="BAB01917.1"/>
    </source>
</evidence>
<organism>
    <name type="scientific">Arabidopsis thaliana</name>
    <name type="common">Mouse-ear cress</name>
    <dbReference type="NCBI Taxonomy" id="3702"/>
    <lineage>
        <taxon>Eukaryota</taxon>
        <taxon>Viridiplantae</taxon>
        <taxon>Streptophyta</taxon>
        <taxon>Embryophyta</taxon>
        <taxon>Tracheophyta</taxon>
        <taxon>Spermatophyta</taxon>
        <taxon>Magnoliopsida</taxon>
        <taxon>eudicotyledons</taxon>
        <taxon>Gunneridae</taxon>
        <taxon>Pentapetalae</taxon>
        <taxon>rosids</taxon>
        <taxon>malvids</taxon>
        <taxon>Brassicales</taxon>
        <taxon>Brassicaceae</taxon>
        <taxon>Camelineae</taxon>
        <taxon>Arabidopsis</taxon>
    </lineage>
</organism>